<dbReference type="EC" id="2.5.1.6" evidence="1"/>
<dbReference type="EMBL" id="CP000394">
    <property type="protein sequence ID" value="ABI63297.1"/>
    <property type="molecule type" value="Genomic_DNA"/>
</dbReference>
<dbReference type="RefSeq" id="WP_011633099.1">
    <property type="nucleotide sequence ID" value="NC_008343.2"/>
</dbReference>
<dbReference type="SMR" id="Q0BPF5"/>
<dbReference type="STRING" id="391165.GbCGDNIH1_2399"/>
<dbReference type="KEGG" id="gbe:GbCGDNIH1_2399"/>
<dbReference type="eggNOG" id="COG0192">
    <property type="taxonomic scope" value="Bacteria"/>
</dbReference>
<dbReference type="HOGENOM" id="CLU_041802_1_1_5"/>
<dbReference type="OrthoDB" id="9801686at2"/>
<dbReference type="UniPathway" id="UPA00315">
    <property type="reaction ID" value="UER00080"/>
</dbReference>
<dbReference type="Proteomes" id="UP000001963">
    <property type="component" value="Chromosome"/>
</dbReference>
<dbReference type="GO" id="GO:0005737">
    <property type="term" value="C:cytoplasm"/>
    <property type="evidence" value="ECO:0007669"/>
    <property type="project" value="UniProtKB-SubCell"/>
</dbReference>
<dbReference type="GO" id="GO:0005524">
    <property type="term" value="F:ATP binding"/>
    <property type="evidence" value="ECO:0007669"/>
    <property type="project" value="UniProtKB-UniRule"/>
</dbReference>
<dbReference type="GO" id="GO:0000287">
    <property type="term" value="F:magnesium ion binding"/>
    <property type="evidence" value="ECO:0007669"/>
    <property type="project" value="UniProtKB-UniRule"/>
</dbReference>
<dbReference type="GO" id="GO:0004478">
    <property type="term" value="F:methionine adenosyltransferase activity"/>
    <property type="evidence" value="ECO:0007669"/>
    <property type="project" value="UniProtKB-UniRule"/>
</dbReference>
<dbReference type="GO" id="GO:0006730">
    <property type="term" value="P:one-carbon metabolic process"/>
    <property type="evidence" value="ECO:0007669"/>
    <property type="project" value="UniProtKB-KW"/>
</dbReference>
<dbReference type="GO" id="GO:0006556">
    <property type="term" value="P:S-adenosylmethionine biosynthetic process"/>
    <property type="evidence" value="ECO:0007669"/>
    <property type="project" value="UniProtKB-UniRule"/>
</dbReference>
<dbReference type="CDD" id="cd18079">
    <property type="entry name" value="S-AdoMet_synt"/>
    <property type="match status" value="1"/>
</dbReference>
<dbReference type="FunFam" id="3.30.300.10:FF:000003">
    <property type="entry name" value="S-adenosylmethionine synthase"/>
    <property type="match status" value="1"/>
</dbReference>
<dbReference type="Gene3D" id="3.30.300.10">
    <property type="match status" value="3"/>
</dbReference>
<dbReference type="HAMAP" id="MF_00086">
    <property type="entry name" value="S_AdoMet_synth1"/>
    <property type="match status" value="1"/>
</dbReference>
<dbReference type="InterPro" id="IPR022631">
    <property type="entry name" value="ADOMET_SYNTHASE_CS"/>
</dbReference>
<dbReference type="InterPro" id="IPR022630">
    <property type="entry name" value="S-AdoMet_synt_C"/>
</dbReference>
<dbReference type="InterPro" id="IPR022629">
    <property type="entry name" value="S-AdoMet_synt_central"/>
</dbReference>
<dbReference type="InterPro" id="IPR022628">
    <property type="entry name" value="S-AdoMet_synt_N"/>
</dbReference>
<dbReference type="InterPro" id="IPR002133">
    <property type="entry name" value="S-AdoMet_synthetase"/>
</dbReference>
<dbReference type="InterPro" id="IPR022636">
    <property type="entry name" value="S-AdoMet_synthetase_sfam"/>
</dbReference>
<dbReference type="NCBIfam" id="TIGR01034">
    <property type="entry name" value="metK"/>
    <property type="match status" value="1"/>
</dbReference>
<dbReference type="PANTHER" id="PTHR11964">
    <property type="entry name" value="S-ADENOSYLMETHIONINE SYNTHETASE"/>
    <property type="match status" value="1"/>
</dbReference>
<dbReference type="Pfam" id="PF02773">
    <property type="entry name" value="S-AdoMet_synt_C"/>
    <property type="match status" value="1"/>
</dbReference>
<dbReference type="Pfam" id="PF02772">
    <property type="entry name" value="S-AdoMet_synt_M"/>
    <property type="match status" value="1"/>
</dbReference>
<dbReference type="Pfam" id="PF00438">
    <property type="entry name" value="S-AdoMet_synt_N"/>
    <property type="match status" value="1"/>
</dbReference>
<dbReference type="PIRSF" id="PIRSF000497">
    <property type="entry name" value="MAT"/>
    <property type="match status" value="1"/>
</dbReference>
<dbReference type="SUPFAM" id="SSF55973">
    <property type="entry name" value="S-adenosylmethionine synthetase"/>
    <property type="match status" value="3"/>
</dbReference>
<dbReference type="PROSITE" id="PS00376">
    <property type="entry name" value="ADOMET_SYNTHASE_1"/>
    <property type="match status" value="1"/>
</dbReference>
<dbReference type="PROSITE" id="PS00377">
    <property type="entry name" value="ADOMET_SYNTHASE_2"/>
    <property type="match status" value="1"/>
</dbReference>
<evidence type="ECO:0000255" key="1">
    <source>
        <dbReference type="HAMAP-Rule" id="MF_00086"/>
    </source>
</evidence>
<keyword id="KW-0067">ATP-binding</keyword>
<keyword id="KW-0963">Cytoplasm</keyword>
<keyword id="KW-0460">Magnesium</keyword>
<keyword id="KW-0479">Metal-binding</keyword>
<keyword id="KW-0547">Nucleotide-binding</keyword>
<keyword id="KW-0554">One-carbon metabolism</keyword>
<keyword id="KW-0630">Potassium</keyword>
<keyword id="KW-1185">Reference proteome</keyword>
<keyword id="KW-0808">Transferase</keyword>
<feature type="chain" id="PRO_0000302920" description="S-adenosylmethionine synthase">
    <location>
        <begin position="1"/>
        <end position="395"/>
    </location>
</feature>
<feature type="region of interest" description="Flexible loop" evidence="1">
    <location>
        <begin position="103"/>
        <end position="113"/>
    </location>
</feature>
<feature type="binding site" description="in other chain" evidence="1">
    <location>
        <position position="18"/>
    </location>
    <ligand>
        <name>ATP</name>
        <dbReference type="ChEBI" id="CHEBI:30616"/>
        <note>ligand shared between two neighboring subunits</note>
    </ligand>
</feature>
<feature type="binding site" evidence="1">
    <location>
        <position position="20"/>
    </location>
    <ligand>
        <name>Mg(2+)</name>
        <dbReference type="ChEBI" id="CHEBI:18420"/>
    </ligand>
</feature>
<feature type="binding site" evidence="1">
    <location>
        <position position="46"/>
    </location>
    <ligand>
        <name>K(+)</name>
        <dbReference type="ChEBI" id="CHEBI:29103"/>
    </ligand>
</feature>
<feature type="binding site" description="in other chain" evidence="1">
    <location>
        <position position="59"/>
    </location>
    <ligand>
        <name>L-methionine</name>
        <dbReference type="ChEBI" id="CHEBI:57844"/>
        <note>ligand shared between two neighboring subunits</note>
    </ligand>
</feature>
<feature type="binding site" description="in other chain" evidence="1">
    <location>
        <position position="103"/>
    </location>
    <ligand>
        <name>L-methionine</name>
        <dbReference type="ChEBI" id="CHEBI:57844"/>
        <note>ligand shared between two neighboring subunits</note>
    </ligand>
</feature>
<feature type="binding site" description="in other chain" evidence="1">
    <location>
        <begin position="170"/>
        <end position="172"/>
    </location>
    <ligand>
        <name>ATP</name>
        <dbReference type="ChEBI" id="CHEBI:30616"/>
        <note>ligand shared between two neighboring subunits</note>
    </ligand>
</feature>
<feature type="binding site" description="in other chain" evidence="1">
    <location>
        <begin position="235"/>
        <end position="236"/>
    </location>
    <ligand>
        <name>ATP</name>
        <dbReference type="ChEBI" id="CHEBI:30616"/>
        <note>ligand shared between two neighboring subunits</note>
    </ligand>
</feature>
<feature type="binding site" evidence="1">
    <location>
        <position position="244"/>
    </location>
    <ligand>
        <name>ATP</name>
        <dbReference type="ChEBI" id="CHEBI:30616"/>
        <note>ligand shared between two neighboring subunits</note>
    </ligand>
</feature>
<feature type="binding site" evidence="1">
    <location>
        <position position="244"/>
    </location>
    <ligand>
        <name>L-methionine</name>
        <dbReference type="ChEBI" id="CHEBI:57844"/>
        <note>ligand shared between two neighboring subunits</note>
    </ligand>
</feature>
<feature type="binding site" description="in other chain" evidence="1">
    <location>
        <begin position="250"/>
        <end position="251"/>
    </location>
    <ligand>
        <name>ATP</name>
        <dbReference type="ChEBI" id="CHEBI:30616"/>
        <note>ligand shared between two neighboring subunits</note>
    </ligand>
</feature>
<feature type="binding site" evidence="1">
    <location>
        <position position="267"/>
    </location>
    <ligand>
        <name>ATP</name>
        <dbReference type="ChEBI" id="CHEBI:30616"/>
        <note>ligand shared between two neighboring subunits</note>
    </ligand>
</feature>
<feature type="binding site" evidence="1">
    <location>
        <position position="271"/>
    </location>
    <ligand>
        <name>ATP</name>
        <dbReference type="ChEBI" id="CHEBI:30616"/>
        <note>ligand shared between two neighboring subunits</note>
    </ligand>
</feature>
<feature type="binding site" description="in other chain" evidence="1">
    <location>
        <position position="275"/>
    </location>
    <ligand>
        <name>L-methionine</name>
        <dbReference type="ChEBI" id="CHEBI:57844"/>
        <note>ligand shared between two neighboring subunits</note>
    </ligand>
</feature>
<protein>
    <recommendedName>
        <fullName evidence="1">S-adenosylmethionine synthase</fullName>
        <shortName evidence="1">AdoMet synthase</shortName>
        <ecNumber evidence="1">2.5.1.6</ecNumber>
    </recommendedName>
    <alternativeName>
        <fullName evidence="1">MAT</fullName>
    </alternativeName>
    <alternativeName>
        <fullName evidence="1">Methionine adenosyltransferase</fullName>
    </alternativeName>
</protein>
<reference key="1">
    <citation type="journal article" date="2007" name="J. Bacteriol.">
        <title>Genome sequence analysis of the emerging human pathogenic acetic acid bacterium Granulibacter bethesdensis.</title>
        <authorList>
            <person name="Greenberg D.E."/>
            <person name="Porcella S.F."/>
            <person name="Zelazny A.M."/>
            <person name="Virtaneva K."/>
            <person name="Sturdevant D.E."/>
            <person name="Kupko J.J. III"/>
            <person name="Barbian K.D."/>
            <person name="Babar A."/>
            <person name="Dorward D.W."/>
            <person name="Holland S.M."/>
        </authorList>
    </citation>
    <scope>NUCLEOTIDE SEQUENCE [LARGE SCALE GENOMIC DNA]</scope>
    <source>
        <strain>ATCC BAA-1260 / CGDNIH1</strain>
    </source>
</reference>
<sequence length="395" mass="42772">MRDKGEYLFTSESVSEGHPDKVADRISDTVLDAFLKADPYARVACETLVTTNRVVLAGETRGPASVTPELLENLTREAIKDIGYDQEGFSWKNADVAIHLHAQSADIAVGVDSTGNKDEGAGDQGIMFGYACRETPALMPAPIYYSHEILRRLTELRKSGSTEGKLLEPDAKSQVTLRYVDGRPVGATSVVVSTQHGEAASQDELRRIVTGVIGQVLPDGWMPPEQEIYVNPTGKFVIGGPDGDAGLTGRKIIVDTYGGAAPHGGGAFSGKDPTKVDRSAAYVARYLAKNVVAAELADRVTLQISYAIGVSHPLSVYVDLHGTGHDVDEVKLEKTLRELVNLSPRGIREHLRLNRPIYVPTSAYGHFGRTPDMALDNFTWEQTDIAAALRSAFNR</sequence>
<accession>Q0BPF5</accession>
<name>METK_GRABC</name>
<organism>
    <name type="scientific">Granulibacter bethesdensis (strain ATCC BAA-1260 / CGDNIH1)</name>
    <dbReference type="NCBI Taxonomy" id="391165"/>
    <lineage>
        <taxon>Bacteria</taxon>
        <taxon>Pseudomonadati</taxon>
        <taxon>Pseudomonadota</taxon>
        <taxon>Alphaproteobacteria</taxon>
        <taxon>Acetobacterales</taxon>
        <taxon>Acetobacteraceae</taxon>
        <taxon>Granulibacter</taxon>
    </lineage>
</organism>
<comment type="function">
    <text evidence="1">Catalyzes the formation of S-adenosylmethionine (AdoMet) from methionine and ATP. The overall synthetic reaction is composed of two sequential steps, AdoMet formation and the subsequent tripolyphosphate hydrolysis which occurs prior to release of AdoMet from the enzyme.</text>
</comment>
<comment type="catalytic activity">
    <reaction evidence="1">
        <text>L-methionine + ATP + H2O = S-adenosyl-L-methionine + phosphate + diphosphate</text>
        <dbReference type="Rhea" id="RHEA:21080"/>
        <dbReference type="ChEBI" id="CHEBI:15377"/>
        <dbReference type="ChEBI" id="CHEBI:30616"/>
        <dbReference type="ChEBI" id="CHEBI:33019"/>
        <dbReference type="ChEBI" id="CHEBI:43474"/>
        <dbReference type="ChEBI" id="CHEBI:57844"/>
        <dbReference type="ChEBI" id="CHEBI:59789"/>
        <dbReference type="EC" id="2.5.1.6"/>
    </reaction>
</comment>
<comment type="cofactor">
    <cofactor evidence="1">
        <name>Mg(2+)</name>
        <dbReference type="ChEBI" id="CHEBI:18420"/>
    </cofactor>
    <text evidence="1">Binds 2 divalent ions per subunit.</text>
</comment>
<comment type="cofactor">
    <cofactor evidence="1">
        <name>K(+)</name>
        <dbReference type="ChEBI" id="CHEBI:29103"/>
    </cofactor>
    <text evidence="1">Binds 1 potassium ion per subunit.</text>
</comment>
<comment type="pathway">
    <text evidence="1">Amino-acid biosynthesis; S-adenosyl-L-methionine biosynthesis; S-adenosyl-L-methionine from L-methionine: step 1/1.</text>
</comment>
<comment type="subunit">
    <text evidence="1">Homotetramer; dimer of dimers.</text>
</comment>
<comment type="subcellular location">
    <subcellularLocation>
        <location evidence="1">Cytoplasm</location>
    </subcellularLocation>
</comment>
<comment type="similarity">
    <text evidence="1">Belongs to the AdoMet synthase family.</text>
</comment>
<proteinExistence type="inferred from homology"/>
<gene>
    <name evidence="1" type="primary">metK</name>
    <name type="ordered locus">GbCGDNIH1_2399</name>
</gene>